<reference key="1">
    <citation type="journal article" date="2005" name="BMC Biol.">
        <title>The sequence of rice chromosomes 11 and 12, rich in disease resistance genes and recent gene duplications.</title>
        <authorList>
            <consortium name="The rice chromosomes 11 and 12 sequencing consortia"/>
        </authorList>
    </citation>
    <scope>NUCLEOTIDE SEQUENCE [LARGE SCALE GENOMIC DNA]</scope>
    <source>
        <strain>cv. Nipponbare</strain>
    </source>
</reference>
<reference key="2">
    <citation type="journal article" date="2005" name="Nature">
        <title>The map-based sequence of the rice genome.</title>
        <authorList>
            <consortium name="International rice genome sequencing project (IRGSP)"/>
        </authorList>
    </citation>
    <scope>NUCLEOTIDE SEQUENCE [LARGE SCALE GENOMIC DNA]</scope>
    <source>
        <strain>cv. Nipponbare</strain>
    </source>
</reference>
<reference key="3">
    <citation type="journal article" date="2008" name="Nucleic Acids Res.">
        <title>The rice annotation project database (RAP-DB): 2008 update.</title>
        <authorList>
            <consortium name="The rice annotation project (RAP)"/>
        </authorList>
    </citation>
    <scope>GENOME REANNOTATION</scope>
    <source>
        <strain>cv. Nipponbare</strain>
    </source>
</reference>
<reference key="4">
    <citation type="journal article" date="2013" name="Rice">
        <title>Improvement of the Oryza sativa Nipponbare reference genome using next generation sequence and optical map data.</title>
        <authorList>
            <person name="Kawahara Y."/>
            <person name="de la Bastide M."/>
            <person name="Hamilton J.P."/>
            <person name="Kanamori H."/>
            <person name="McCombie W.R."/>
            <person name="Ouyang S."/>
            <person name="Schwartz D.C."/>
            <person name="Tanaka T."/>
            <person name="Wu J."/>
            <person name="Zhou S."/>
            <person name="Childs K.L."/>
            <person name="Davidson R.M."/>
            <person name="Lin H."/>
            <person name="Quesada-Ocampo L."/>
            <person name="Vaillancourt B."/>
            <person name="Sakai H."/>
            <person name="Lee S.S."/>
            <person name="Kim J."/>
            <person name="Numa H."/>
            <person name="Itoh T."/>
            <person name="Buell C.R."/>
            <person name="Matsumoto T."/>
        </authorList>
    </citation>
    <scope>GENOME REANNOTATION</scope>
    <source>
        <strain>cv. Nipponbare</strain>
    </source>
</reference>
<reference key="5">
    <citation type="journal article" date="2010" name="J. Biol. Chem.">
        <title>Sekiguchi lesion gene encodes a cytochrome P450 monooxygenase that catalyzes conversion of tryptamine to serotonin in rice.</title>
        <authorList>
            <person name="Fujiwara T."/>
            <person name="Maisonneuve S."/>
            <person name="Isshiki M."/>
            <person name="Mizutani M."/>
            <person name="Chen L."/>
            <person name="Wong H.L."/>
            <person name="Kawasaki T."/>
            <person name="Shimamoto K."/>
        </authorList>
    </citation>
    <scope>FUNCTION</scope>
    <scope>CATALYTIC ACTIVITY</scope>
    <scope>SUBCELLULAR LOCATION</scope>
    <scope>MUTAGENESIS OF THR-314 AND GLY-455</scope>
</reference>
<reference key="6">
    <citation type="journal article" date="2011" name="Appl. Microbiol. Biotechnol.">
        <title>Production of serotonin by dual expression of tryptophan decarboxylase and tryptamine 5-hydroxylase in Escherichia coli.</title>
        <authorList>
            <person name="Park S."/>
            <person name="Kang K."/>
            <person name="Lee S.W."/>
            <person name="Ahn M.J."/>
            <person name="Bae J.M."/>
            <person name="Back K."/>
        </authorList>
    </citation>
    <scope>FUNCTION</scope>
    <scope>CATALYTIC ACTIVITY</scope>
</reference>
<reference key="7">
    <citation type="journal article" date="2013" name="Bioprocess Biosyst. Eng.">
        <title>Rice P450 reductases differentially affect P450-mediated metabolism in bacterial expression systems.</title>
        <authorList>
            <person name="Park S."/>
            <person name="Kim Y.S."/>
            <person name="Rupasinghe S.G."/>
            <person name="Schuler M.A."/>
            <person name="Back K."/>
        </authorList>
    </citation>
    <scope>FUNCTION</scope>
    <scope>CATALYTIC ACTIVITY</scope>
    <scope>INDUCTION</scope>
</reference>
<reference key="8">
    <citation type="journal article" date="2013" name="J. Pineal Res.">
        <title>Transient induction of melatonin biosynthesis in rice (Oryza sativa L.) during the reproductive stage.</title>
        <authorList>
            <person name="Park S."/>
            <person name="Le T.N."/>
            <person name="Byeon Y."/>
            <person name="Kim Y.S."/>
            <person name="Back K."/>
        </authorList>
    </citation>
    <scope>DEVELOPMENTAL STAGE</scope>
</reference>
<reference key="9">
    <citation type="journal article" date="2013" name="J. Pineal Res.">
        <title>Transcriptional suppression of tryptamine 5-hydroxylase, a terminal serotonin biosynthetic gene, induces melatonin biosynthesis in rice (Oryza sativa L.).</title>
        <authorList>
            <person name="Park S."/>
            <person name="Byeon Y."/>
            <person name="Back K."/>
        </authorList>
    </citation>
    <scope>FUNCTION</scope>
</reference>
<feature type="chain" id="PRO_0000444625" description="Tryptamine 5-hydroxylase">
    <location>
        <begin position="1"/>
        <end position="523"/>
    </location>
</feature>
<feature type="transmembrane region" description="Helical" evidence="2">
    <location>
        <begin position="5"/>
        <end position="25"/>
    </location>
</feature>
<feature type="binding site" description="axial binding residue" evidence="1">
    <location>
        <position position="453"/>
    </location>
    <ligand>
        <name>heme</name>
        <dbReference type="ChEBI" id="CHEBI:30413"/>
    </ligand>
    <ligandPart>
        <name>Fe</name>
        <dbReference type="ChEBI" id="CHEBI:18248"/>
    </ligandPart>
</feature>
<feature type="mutagenesis site" description="Sekiguchi lesion phenotype." evidence="3">
    <original>T</original>
    <variation>I</variation>
    <location>
        <position position="314"/>
    </location>
</feature>
<feature type="mutagenesis site" description="Sekiguchi lesion phenotype." evidence="3">
    <original>G</original>
    <variation>D</variation>
    <location>
        <position position="455"/>
    </location>
</feature>
<keyword id="KW-0256">Endoplasmic reticulum</keyword>
<keyword id="KW-0349">Heme</keyword>
<keyword id="KW-0408">Iron</keyword>
<keyword id="KW-0472">Membrane</keyword>
<keyword id="KW-0479">Metal-binding</keyword>
<keyword id="KW-0503">Monooxygenase</keyword>
<keyword id="KW-0560">Oxidoreductase</keyword>
<keyword id="KW-0611">Plant defense</keyword>
<keyword id="KW-1185">Reference proteome</keyword>
<keyword id="KW-0724">Serotonin biosynthesis</keyword>
<keyword id="KW-0812">Transmembrane</keyword>
<keyword id="KW-1133">Transmembrane helix</keyword>
<organism>
    <name type="scientific">Oryza sativa subsp. japonica</name>
    <name type="common">Rice</name>
    <dbReference type="NCBI Taxonomy" id="39947"/>
    <lineage>
        <taxon>Eukaryota</taxon>
        <taxon>Viridiplantae</taxon>
        <taxon>Streptophyta</taxon>
        <taxon>Embryophyta</taxon>
        <taxon>Tracheophyta</taxon>
        <taxon>Spermatophyta</taxon>
        <taxon>Magnoliopsida</taxon>
        <taxon>Liliopsida</taxon>
        <taxon>Poales</taxon>
        <taxon>Poaceae</taxon>
        <taxon>BOP clade</taxon>
        <taxon>Oryzoideae</taxon>
        <taxon>Oryzeae</taxon>
        <taxon>Oryzinae</taxon>
        <taxon>Oryza</taxon>
        <taxon>Oryza sativa</taxon>
    </lineage>
</organism>
<comment type="function">
    <text evidence="3 4 5 7">Involved in serotonin biosynthesis. Catalyzes the conversion of tryptamine to serotonin (PubMed:20150424, PubMed:21080162, PubMed:23053415, PubMed:23521226). Accumulation of serotonin may play a role in innate immunity (PubMed:20150424).</text>
</comment>
<comment type="catalytic activity">
    <reaction evidence="3 4 5">
        <text>tryptamine + reduced [NADPH--hemoprotein reductase] + O2 = serotonin + oxidized [NADPH--hemoprotein reductase] + H2O + H(+)</text>
        <dbReference type="Rhea" id="RHEA:52320"/>
        <dbReference type="Rhea" id="RHEA-COMP:11964"/>
        <dbReference type="Rhea" id="RHEA-COMP:11965"/>
        <dbReference type="ChEBI" id="CHEBI:15377"/>
        <dbReference type="ChEBI" id="CHEBI:15378"/>
        <dbReference type="ChEBI" id="CHEBI:15379"/>
        <dbReference type="ChEBI" id="CHEBI:57618"/>
        <dbReference type="ChEBI" id="CHEBI:57887"/>
        <dbReference type="ChEBI" id="CHEBI:58210"/>
        <dbReference type="ChEBI" id="CHEBI:350546"/>
        <dbReference type="EC" id="1.14.14.186"/>
    </reaction>
    <physiologicalReaction direction="left-to-right" evidence="3 4 5">
        <dbReference type="Rhea" id="RHEA:52321"/>
    </physiologicalReaction>
</comment>
<comment type="cofactor">
    <cofactor evidence="1">
        <name>heme</name>
        <dbReference type="ChEBI" id="CHEBI:30413"/>
    </cofactor>
</comment>
<comment type="subcellular location">
    <subcellularLocation>
        <location evidence="11">Endoplasmic reticulum membrane</location>
        <topology evidence="2">Single-pass membrane protein</topology>
    </subcellularLocation>
</comment>
<comment type="developmental stage">
    <text evidence="6">Expression increases in the panicle from 7 days before flowering to flowering stage, to become undetectable 7 days after flowering.</text>
</comment>
<comment type="induction">
    <text evidence="3 5">Induced by N-acetylchitooligosaccharide elicitor and infection with a compatible race of the rice blast fungus Magnaporthe oryzae (PubMed:20150424). Induced by salt stress, methyl viologen, acifluorfen and cadmium (PubMed:23053415).</text>
</comment>
<comment type="similarity">
    <text evidence="10">Belongs to the cytochrome P450 family.</text>
</comment>
<comment type="sequence caution" evidence="10">
    <conflict type="erroneous gene model prediction">
        <sequence resource="EMBL-CDS" id="BAF29561"/>
    </conflict>
</comment>
<sequence>MELTMASTMSLALLVLSAAYVLVALRRSRSSSSKPRRLPPSPPGWPVIGHLHLMSGMPHHALAELARTMRAPLFRMRLGSVPAVVISKPDLARAALTTNDAALASRPHLLSGQFLSFGCSDVTFAPAGPYHRMARRVVVSELLSARRVATYGAVRVKELRRLLAHLTKNTSPAKPVDLSECFLNLANDVLCRVAFGRRFPHGEGDKLGAVLAEAQDLFAGFTIGDFFPELEPVASTVTGLRRRLKKCLADLREACDVIVDEHISGNRQRIPGDRDEDFVDVLLRVQKSPDLEVPLTDDNLKALVLDMFVAGTDTTFATLEWVMTELVRHPRILKKAQEEVRRVVGDSGRVEESHLGELHYMRAIIKETFRLHPAVPLLVPRESVAPCTLGGYDIPARTRVFINTFAMGRDPEIWDNPLEYSPERFESAGGGGEIDLKDPDYKLLPFGGGRRGCPGYTFALATVQVSLASLLYHFEWALPAGVRAEDVNLDETFGLATRKKEPLFVAVRKSDAYEFKGEELSEV</sequence>
<protein>
    <recommendedName>
        <fullName evidence="8">Tryptamine 5-hydroxylase</fullName>
        <ecNumber evidence="3">1.14.14.186</ecNumber>
    </recommendedName>
    <alternativeName>
        <fullName evidence="8">Cytochrome P450 71P1</fullName>
    </alternativeName>
    <alternativeName>
        <fullName evidence="8">Protein SEKIGUCHI LESION</fullName>
    </alternativeName>
</protein>
<accession>Q2QUC5</accession>
<accession>Q0IP04</accession>
<evidence type="ECO:0000250" key="1">
    <source>
        <dbReference type="UniProtKB" id="P04798"/>
    </source>
</evidence>
<evidence type="ECO:0000255" key="2"/>
<evidence type="ECO:0000269" key="3">
    <source>
    </source>
</evidence>
<evidence type="ECO:0000269" key="4">
    <source>
    </source>
</evidence>
<evidence type="ECO:0000269" key="5">
    <source>
    </source>
</evidence>
<evidence type="ECO:0000269" key="6">
    <source>
    </source>
</evidence>
<evidence type="ECO:0000269" key="7">
    <source>
    </source>
</evidence>
<evidence type="ECO:0000303" key="8">
    <source>
    </source>
</evidence>
<evidence type="ECO:0000303" key="9">
    <source>
    </source>
</evidence>
<evidence type="ECO:0000305" key="10"/>
<evidence type="ECO:0000305" key="11">
    <source>
    </source>
</evidence>
<evidence type="ECO:0000312" key="12">
    <source>
        <dbReference type="EMBL" id="ABA97037.1"/>
    </source>
</evidence>
<evidence type="ECO:0000312" key="13">
    <source>
        <dbReference type="EMBL" id="BAT16632.1"/>
    </source>
</evidence>
<dbReference type="EC" id="1.14.14.186" evidence="3"/>
<dbReference type="EMBL" id="DP000011">
    <property type="protein sequence ID" value="ABA97037.1"/>
    <property type="molecule type" value="Genomic_DNA"/>
</dbReference>
<dbReference type="EMBL" id="AP008218">
    <property type="protein sequence ID" value="BAF29561.1"/>
    <property type="status" value="ALT_SEQ"/>
    <property type="molecule type" value="Genomic_DNA"/>
</dbReference>
<dbReference type="EMBL" id="AP014968">
    <property type="protein sequence ID" value="BAT16632.1"/>
    <property type="molecule type" value="Genomic_DNA"/>
</dbReference>
<dbReference type="EMBL" id="AK071599">
    <property type="protein sequence ID" value="BAG92576.1"/>
    <property type="molecule type" value="mRNA"/>
</dbReference>
<dbReference type="RefSeq" id="XP_015618264.1">
    <property type="nucleotide sequence ID" value="XM_015762778.1"/>
</dbReference>
<dbReference type="SMR" id="Q2QUC5"/>
<dbReference type="FunCoup" id="Q2QUC5">
    <property type="interactions" value="466"/>
</dbReference>
<dbReference type="STRING" id="39947.Q2QUC5"/>
<dbReference type="PaxDb" id="39947-Q2QUC5"/>
<dbReference type="EnsemblPlants" id="Os12t0268000-01">
    <property type="protein sequence ID" value="Os12t0268000-01"/>
    <property type="gene ID" value="Os12g0268000"/>
</dbReference>
<dbReference type="Gramene" id="Os12t0268000-01">
    <property type="protein sequence ID" value="Os12t0268000-01"/>
    <property type="gene ID" value="Os12g0268000"/>
</dbReference>
<dbReference type="KEGG" id="dosa:Os12g0268000"/>
<dbReference type="eggNOG" id="KOG0156">
    <property type="taxonomic scope" value="Eukaryota"/>
</dbReference>
<dbReference type="HOGENOM" id="CLU_001570_4_0_1"/>
<dbReference type="InParanoid" id="Q2QUC5"/>
<dbReference type="OMA" id="LVTKGMH"/>
<dbReference type="OrthoDB" id="2789670at2759"/>
<dbReference type="Proteomes" id="UP000000763">
    <property type="component" value="Chromosome 12"/>
</dbReference>
<dbReference type="Proteomes" id="UP000059680">
    <property type="component" value="Chromosome 12"/>
</dbReference>
<dbReference type="GO" id="GO:0005789">
    <property type="term" value="C:endoplasmic reticulum membrane"/>
    <property type="evidence" value="ECO:0000314"/>
    <property type="project" value="UniProtKB"/>
</dbReference>
<dbReference type="GO" id="GO:0020037">
    <property type="term" value="F:heme binding"/>
    <property type="evidence" value="ECO:0007669"/>
    <property type="project" value="InterPro"/>
</dbReference>
<dbReference type="GO" id="GO:0005506">
    <property type="term" value="F:iron ion binding"/>
    <property type="evidence" value="ECO:0007669"/>
    <property type="project" value="InterPro"/>
</dbReference>
<dbReference type="GO" id="GO:0004497">
    <property type="term" value="F:monooxygenase activity"/>
    <property type="evidence" value="ECO:0000314"/>
    <property type="project" value="UniProtKB"/>
</dbReference>
<dbReference type="GO" id="GO:0016705">
    <property type="term" value="F:oxidoreductase activity, acting on paired donors, with incorporation or reduction of molecular oxygen"/>
    <property type="evidence" value="ECO:0007669"/>
    <property type="project" value="InterPro"/>
</dbReference>
<dbReference type="GO" id="GO:0006952">
    <property type="term" value="P:defense response"/>
    <property type="evidence" value="ECO:0007669"/>
    <property type="project" value="UniProtKB-KW"/>
</dbReference>
<dbReference type="GO" id="GO:0006587">
    <property type="term" value="P:serotonin biosynthetic process from tryptophan"/>
    <property type="evidence" value="ECO:0000314"/>
    <property type="project" value="UniProtKB"/>
</dbReference>
<dbReference type="CDD" id="cd11072">
    <property type="entry name" value="CYP71-like"/>
    <property type="match status" value="1"/>
</dbReference>
<dbReference type="FunFam" id="1.10.630.10:FF:000077">
    <property type="entry name" value="Cytochrome P450 71A1-like"/>
    <property type="match status" value="1"/>
</dbReference>
<dbReference type="Gene3D" id="1.10.630.10">
    <property type="entry name" value="Cytochrome P450"/>
    <property type="match status" value="1"/>
</dbReference>
<dbReference type="InterPro" id="IPR001128">
    <property type="entry name" value="Cyt_P450"/>
</dbReference>
<dbReference type="InterPro" id="IPR017972">
    <property type="entry name" value="Cyt_P450_CS"/>
</dbReference>
<dbReference type="InterPro" id="IPR002401">
    <property type="entry name" value="Cyt_P450_E_grp-I"/>
</dbReference>
<dbReference type="InterPro" id="IPR036396">
    <property type="entry name" value="Cyt_P450_sf"/>
</dbReference>
<dbReference type="PANTHER" id="PTHR47955:SF11">
    <property type="entry name" value="4-HYDROXYPHENYLACETALDEHYDE OXIME MONOOXYGENASE"/>
    <property type="match status" value="1"/>
</dbReference>
<dbReference type="PANTHER" id="PTHR47955">
    <property type="entry name" value="CYTOCHROME P450 FAMILY 71 PROTEIN"/>
    <property type="match status" value="1"/>
</dbReference>
<dbReference type="Pfam" id="PF00067">
    <property type="entry name" value="p450"/>
    <property type="match status" value="1"/>
</dbReference>
<dbReference type="PRINTS" id="PR00463">
    <property type="entry name" value="EP450I"/>
</dbReference>
<dbReference type="PRINTS" id="PR00385">
    <property type="entry name" value="P450"/>
</dbReference>
<dbReference type="SUPFAM" id="SSF48264">
    <property type="entry name" value="Cytochrome P450"/>
    <property type="match status" value="1"/>
</dbReference>
<dbReference type="PROSITE" id="PS00086">
    <property type="entry name" value="CYTOCHROME_P450"/>
    <property type="match status" value="1"/>
</dbReference>
<name>C71P1_ORYSJ</name>
<proteinExistence type="evidence at protein level"/>
<gene>
    <name evidence="8" type="primary">CYP71P1</name>
    <name evidence="8" type="synonym">SL</name>
    <name evidence="9" type="synonym">T5H</name>
    <name evidence="13" type="ordered locus">Os12g0268000</name>
    <name evidence="12" type="ordered locus">LOC_Os12g16720</name>
</gene>